<reference key="1">
    <citation type="submission" date="2007-02" db="EMBL/GenBank/DDBJ databases">
        <title>Complete sequence of chromosome of Shewanella baltica OS155.</title>
        <authorList>
            <consortium name="US DOE Joint Genome Institute"/>
            <person name="Copeland A."/>
            <person name="Lucas S."/>
            <person name="Lapidus A."/>
            <person name="Barry K."/>
            <person name="Detter J.C."/>
            <person name="Glavina del Rio T."/>
            <person name="Hammon N."/>
            <person name="Israni S."/>
            <person name="Dalin E."/>
            <person name="Tice H."/>
            <person name="Pitluck S."/>
            <person name="Sims D.R."/>
            <person name="Brettin T."/>
            <person name="Bruce D."/>
            <person name="Han C."/>
            <person name="Tapia R."/>
            <person name="Brainard J."/>
            <person name="Schmutz J."/>
            <person name="Larimer F."/>
            <person name="Land M."/>
            <person name="Hauser L."/>
            <person name="Kyrpides N."/>
            <person name="Mikhailova N."/>
            <person name="Brettar I."/>
            <person name="Klappenbach J."/>
            <person name="Konstantinidis K."/>
            <person name="Rodrigues J."/>
            <person name="Tiedje J."/>
            <person name="Richardson P."/>
        </authorList>
    </citation>
    <scope>NUCLEOTIDE SEQUENCE [LARGE SCALE GENOMIC DNA]</scope>
    <source>
        <strain>OS155 / ATCC BAA-1091</strain>
    </source>
</reference>
<organism>
    <name type="scientific">Shewanella baltica (strain OS155 / ATCC BAA-1091)</name>
    <dbReference type="NCBI Taxonomy" id="325240"/>
    <lineage>
        <taxon>Bacteria</taxon>
        <taxon>Pseudomonadati</taxon>
        <taxon>Pseudomonadota</taxon>
        <taxon>Gammaproteobacteria</taxon>
        <taxon>Alteromonadales</taxon>
        <taxon>Shewanellaceae</taxon>
        <taxon>Shewanella</taxon>
    </lineage>
</organism>
<evidence type="ECO:0000255" key="1">
    <source>
        <dbReference type="HAMAP-Rule" id="MF_00236"/>
    </source>
</evidence>
<evidence type="ECO:0000256" key="2">
    <source>
        <dbReference type="SAM" id="MobiDB-lite"/>
    </source>
</evidence>
<gene>
    <name evidence="1" type="primary">tatA</name>
    <name type="ordered locus">Sbal_3898</name>
</gene>
<protein>
    <recommendedName>
        <fullName evidence="1">Sec-independent protein translocase protein TatA</fullName>
    </recommendedName>
</protein>
<keyword id="KW-0997">Cell inner membrane</keyword>
<keyword id="KW-1003">Cell membrane</keyword>
<keyword id="KW-0472">Membrane</keyword>
<keyword id="KW-0653">Protein transport</keyword>
<keyword id="KW-1185">Reference proteome</keyword>
<keyword id="KW-0811">Translocation</keyword>
<keyword id="KW-0812">Transmembrane</keyword>
<keyword id="KW-1133">Transmembrane helix</keyword>
<keyword id="KW-0813">Transport</keyword>
<sequence length="79" mass="8420">MGGISIWQLLIVALIVVLLFGTKKLRSLGGDLGGAVKGFKNAMSSEEDKKALEDTEAAKTAQTTQQATEKKPESNKEQA</sequence>
<dbReference type="EMBL" id="CP000563">
    <property type="protein sequence ID" value="ABN63368.1"/>
    <property type="molecule type" value="Genomic_DNA"/>
</dbReference>
<dbReference type="RefSeq" id="WP_006083329.1">
    <property type="nucleotide sequence ID" value="NC_009052.1"/>
</dbReference>
<dbReference type="SMR" id="A3D9F5"/>
<dbReference type="STRING" id="325240.Sbal_3898"/>
<dbReference type="GeneID" id="11770767"/>
<dbReference type="KEGG" id="sbl:Sbal_3898"/>
<dbReference type="HOGENOM" id="CLU_086034_5_1_6"/>
<dbReference type="OrthoDB" id="7066617at2"/>
<dbReference type="Proteomes" id="UP000001557">
    <property type="component" value="Chromosome"/>
</dbReference>
<dbReference type="GO" id="GO:0033281">
    <property type="term" value="C:TAT protein transport complex"/>
    <property type="evidence" value="ECO:0007669"/>
    <property type="project" value="UniProtKB-UniRule"/>
</dbReference>
<dbReference type="GO" id="GO:0008320">
    <property type="term" value="F:protein transmembrane transporter activity"/>
    <property type="evidence" value="ECO:0007669"/>
    <property type="project" value="UniProtKB-UniRule"/>
</dbReference>
<dbReference type="GO" id="GO:0043953">
    <property type="term" value="P:protein transport by the Tat complex"/>
    <property type="evidence" value="ECO:0007669"/>
    <property type="project" value="UniProtKB-UniRule"/>
</dbReference>
<dbReference type="Gene3D" id="1.20.5.3310">
    <property type="match status" value="1"/>
</dbReference>
<dbReference type="HAMAP" id="MF_00236">
    <property type="entry name" value="TatA_E"/>
    <property type="match status" value="1"/>
</dbReference>
<dbReference type="InterPro" id="IPR003369">
    <property type="entry name" value="TatA/B/E"/>
</dbReference>
<dbReference type="InterPro" id="IPR006312">
    <property type="entry name" value="TatA/E"/>
</dbReference>
<dbReference type="NCBIfam" id="NF002813">
    <property type="entry name" value="PRK02958.1"/>
    <property type="match status" value="1"/>
</dbReference>
<dbReference type="NCBIfam" id="TIGR01411">
    <property type="entry name" value="tatAE"/>
    <property type="match status" value="1"/>
</dbReference>
<dbReference type="PANTHER" id="PTHR42982">
    <property type="entry name" value="SEC-INDEPENDENT PROTEIN TRANSLOCASE PROTEIN TATA"/>
    <property type="match status" value="1"/>
</dbReference>
<dbReference type="PANTHER" id="PTHR42982:SF1">
    <property type="entry name" value="SEC-INDEPENDENT PROTEIN TRANSLOCASE PROTEIN TATA"/>
    <property type="match status" value="1"/>
</dbReference>
<dbReference type="Pfam" id="PF02416">
    <property type="entry name" value="TatA_B_E"/>
    <property type="match status" value="1"/>
</dbReference>
<comment type="function">
    <text evidence="1">Part of the twin-arginine translocation (Tat) system that transports large folded proteins containing a characteristic twin-arginine motif in their signal peptide across membranes. TatA could form the protein-conducting channel of the Tat system.</text>
</comment>
<comment type="subunit">
    <text evidence="1">The Tat system comprises two distinct complexes: a TatABC complex, containing multiple copies of TatA, TatB and TatC subunits, and a separate TatA complex, containing only TatA subunits. Substrates initially bind to the TatABC complex, which probably triggers association of the separate TatA complex to form the active translocon.</text>
</comment>
<comment type="subcellular location">
    <subcellularLocation>
        <location evidence="1">Cell inner membrane</location>
        <topology evidence="1">Single-pass membrane protein</topology>
    </subcellularLocation>
</comment>
<comment type="similarity">
    <text evidence="1">Belongs to the TatA/E family.</text>
</comment>
<accession>A3D9F5</accession>
<proteinExistence type="inferred from homology"/>
<feature type="chain" id="PRO_1000044438" description="Sec-independent protein translocase protein TatA">
    <location>
        <begin position="1"/>
        <end position="79"/>
    </location>
</feature>
<feature type="transmembrane region" description="Helical" evidence="1">
    <location>
        <begin position="1"/>
        <end position="21"/>
    </location>
</feature>
<feature type="region of interest" description="Disordered" evidence="2">
    <location>
        <begin position="43"/>
        <end position="79"/>
    </location>
</feature>
<feature type="compositionally biased region" description="Basic and acidic residues" evidence="2">
    <location>
        <begin position="46"/>
        <end position="57"/>
    </location>
</feature>
<feature type="compositionally biased region" description="Low complexity" evidence="2">
    <location>
        <begin position="58"/>
        <end position="67"/>
    </location>
</feature>
<feature type="compositionally biased region" description="Basic and acidic residues" evidence="2">
    <location>
        <begin position="68"/>
        <end position="79"/>
    </location>
</feature>
<name>TATA_SHEB5</name>